<proteinExistence type="evidence at protein level"/>
<feature type="chain" id="PRO_0000086678" description="SRSF protein kinase 2">
    <location>
        <begin position="1"/>
        <end position="681"/>
    </location>
</feature>
<feature type="chain" id="PRO_0000414753" description="SRSF protein kinase 2 N-terminal">
    <location>
        <begin position="1"/>
        <end position="137"/>
    </location>
</feature>
<feature type="chain" id="PRO_0000414754" description="SRSF protein kinase 2 C-terminal">
    <location>
        <begin position="138"/>
        <end position="681"/>
    </location>
</feature>
<feature type="domain" description="Protein kinase" evidence="5">
    <location>
        <begin position="79"/>
        <end position="681"/>
    </location>
</feature>
<feature type="region of interest" description="Disordered" evidence="7">
    <location>
        <begin position="1"/>
        <end position="63"/>
    </location>
</feature>
<feature type="region of interest" description="Disordered" evidence="7">
    <location>
        <begin position="237"/>
        <end position="270"/>
    </location>
</feature>
<feature type="region of interest" description="Disordered" evidence="7">
    <location>
        <begin position="302"/>
        <end position="452"/>
    </location>
</feature>
<feature type="region of interest" description="Disordered" evidence="7">
    <location>
        <begin position="467"/>
        <end position="499"/>
    </location>
</feature>
<feature type="compositionally biased region" description="Pro residues" evidence="7">
    <location>
        <begin position="22"/>
        <end position="41"/>
    </location>
</feature>
<feature type="compositionally biased region" description="Acidic residues" evidence="7">
    <location>
        <begin position="42"/>
        <end position="59"/>
    </location>
</feature>
<feature type="compositionally biased region" description="Acidic residues" evidence="7">
    <location>
        <begin position="395"/>
        <end position="419"/>
    </location>
</feature>
<feature type="compositionally biased region" description="Polar residues" evidence="7">
    <location>
        <begin position="421"/>
        <end position="431"/>
    </location>
</feature>
<feature type="active site" description="Proton acceptor" evidence="4 5 6">
    <location>
        <position position="212"/>
    </location>
</feature>
<feature type="binding site" evidence="4 5">
    <location>
        <begin position="85"/>
        <end position="93"/>
    </location>
    <ligand>
        <name>ATP</name>
        <dbReference type="ChEBI" id="CHEBI:30616"/>
    </ligand>
</feature>
<feature type="binding site" evidence="4 5">
    <location>
        <position position="108"/>
    </location>
    <ligand>
        <name>ATP</name>
        <dbReference type="ChEBI" id="CHEBI:30616"/>
    </ligand>
</feature>
<feature type="site" description="Cleavage; by caspase-3" evidence="1">
    <location>
        <begin position="137"/>
        <end position="138"/>
    </location>
</feature>
<feature type="site" description="Cleavage; by caspase-3" evidence="1">
    <location>
        <begin position="401"/>
        <end position="402"/>
    </location>
</feature>
<feature type="modified residue" description="Phosphoserine" evidence="15">
    <location>
        <position position="50"/>
    </location>
</feature>
<feature type="modified residue" description="Phosphothreonine" evidence="15">
    <location>
        <position position="331"/>
    </location>
</feature>
<feature type="modified residue" description="Phosphothreonine" evidence="15">
    <location>
        <position position="332"/>
    </location>
</feature>
<feature type="modified residue" description="Phosphoserine" evidence="15">
    <location>
        <position position="378"/>
    </location>
</feature>
<feature type="modified residue" description="Phosphoserine" evidence="15">
    <location>
        <position position="468"/>
    </location>
</feature>
<feature type="modified residue" description="Phosphothreonine" evidence="15">
    <location>
        <position position="471"/>
    </location>
</feature>
<feature type="modified residue" description="Phosphoserine" evidence="15">
    <location>
        <position position="477"/>
    </location>
</feature>
<feature type="modified residue" description="Phosphoserine" evidence="15">
    <location>
        <position position="479"/>
    </location>
</feature>
<feature type="modified residue" description="Phosphoserine" evidence="15">
    <location>
        <position position="483"/>
    </location>
</feature>
<feature type="modified residue" description="Phosphothreonine; by PKB/AKT1" evidence="2">
    <location>
        <position position="485"/>
    </location>
</feature>
<feature type="modified residue" description="Phosphoserine" evidence="15">
    <location>
        <position position="487"/>
    </location>
</feature>
<feature type="modified residue" description="Phosphoserine" evidence="2">
    <location>
        <position position="490"/>
    </location>
</feature>
<feature type="modified residue" description="Phosphoserine; by CK2" evidence="1">
    <location>
        <position position="581"/>
    </location>
</feature>
<feature type="sequence conflict" description="In Ref. 2; AAH20178." evidence="11" ref="2">
    <original>Q</original>
    <variation>QQ</variation>
    <location>
        <position position="313"/>
    </location>
</feature>
<feature type="sequence conflict" description="In Ref. 1; BAA24055." evidence="11" ref="1">
    <original>L</original>
    <variation>P</variation>
    <location>
        <position position="368"/>
    </location>
</feature>
<dbReference type="EC" id="2.7.11.1" evidence="10"/>
<dbReference type="EMBL" id="AB006036">
    <property type="protein sequence ID" value="BAA24055.1"/>
    <property type="molecule type" value="mRNA"/>
</dbReference>
<dbReference type="EMBL" id="BC020178">
    <property type="protein sequence ID" value="AAH20178.1"/>
    <property type="molecule type" value="mRNA"/>
</dbReference>
<dbReference type="PIR" id="JC5929">
    <property type="entry name" value="JC5929"/>
</dbReference>
<dbReference type="RefSeq" id="NP_033300.2">
    <property type="nucleotide sequence ID" value="NM_009274.2"/>
</dbReference>
<dbReference type="RefSeq" id="XP_017176258.1">
    <property type="nucleotide sequence ID" value="XM_017320769.1"/>
</dbReference>
<dbReference type="SMR" id="O54781"/>
<dbReference type="BioGRID" id="203503">
    <property type="interactions" value="26"/>
</dbReference>
<dbReference type="FunCoup" id="O54781">
    <property type="interactions" value="3531"/>
</dbReference>
<dbReference type="IntAct" id="O54781">
    <property type="interactions" value="6"/>
</dbReference>
<dbReference type="MINT" id="O54781"/>
<dbReference type="STRING" id="10090.ENSMUSP00000085734"/>
<dbReference type="GlyGen" id="O54781">
    <property type="glycosylation" value="2 sites, 1 O-linked glycan (2 sites)"/>
</dbReference>
<dbReference type="iPTMnet" id="O54781"/>
<dbReference type="PhosphoSitePlus" id="O54781"/>
<dbReference type="jPOST" id="O54781"/>
<dbReference type="PaxDb" id="10090-ENSMUSP00000085734"/>
<dbReference type="PeptideAtlas" id="O54781"/>
<dbReference type="ProteomicsDB" id="257402"/>
<dbReference type="Pumba" id="O54781"/>
<dbReference type="DNASU" id="20817"/>
<dbReference type="GeneID" id="20817"/>
<dbReference type="KEGG" id="mmu:20817"/>
<dbReference type="UCSC" id="uc008wqe.1">
    <property type="organism name" value="mouse"/>
</dbReference>
<dbReference type="AGR" id="MGI:1201408"/>
<dbReference type="CTD" id="6733"/>
<dbReference type="MGI" id="MGI:1201408">
    <property type="gene designation" value="Srpk2"/>
</dbReference>
<dbReference type="eggNOG" id="KOG1290">
    <property type="taxonomic scope" value="Eukaryota"/>
</dbReference>
<dbReference type="InParanoid" id="O54781"/>
<dbReference type="OrthoDB" id="2649at2759"/>
<dbReference type="PhylomeDB" id="O54781"/>
<dbReference type="TreeFam" id="TF105334"/>
<dbReference type="BioGRID-ORCS" id="20817">
    <property type="hits" value="6 hits in 81 CRISPR screens"/>
</dbReference>
<dbReference type="CD-CODE" id="CE726F99">
    <property type="entry name" value="Postsynaptic density"/>
</dbReference>
<dbReference type="ChiTaRS" id="Srpk2">
    <property type="organism name" value="mouse"/>
</dbReference>
<dbReference type="PRO" id="PR:O54781"/>
<dbReference type="Proteomes" id="UP000000589">
    <property type="component" value="Unplaced"/>
</dbReference>
<dbReference type="RNAct" id="O54781">
    <property type="molecule type" value="protein"/>
</dbReference>
<dbReference type="GO" id="GO:0000785">
    <property type="term" value="C:chromatin"/>
    <property type="evidence" value="ECO:0000250"/>
    <property type="project" value="UniProtKB"/>
</dbReference>
<dbReference type="GO" id="GO:0005737">
    <property type="term" value="C:cytoplasm"/>
    <property type="evidence" value="ECO:0000314"/>
    <property type="project" value="UniProtKB"/>
</dbReference>
<dbReference type="GO" id="GO:0016607">
    <property type="term" value="C:nuclear speck"/>
    <property type="evidence" value="ECO:0000250"/>
    <property type="project" value="UniProtKB"/>
</dbReference>
<dbReference type="GO" id="GO:0005654">
    <property type="term" value="C:nucleoplasm"/>
    <property type="evidence" value="ECO:0000250"/>
    <property type="project" value="UniProtKB"/>
</dbReference>
<dbReference type="GO" id="GO:0005634">
    <property type="term" value="C:nucleus"/>
    <property type="evidence" value="ECO:0000314"/>
    <property type="project" value="UniProtKB"/>
</dbReference>
<dbReference type="GO" id="GO:0071889">
    <property type="term" value="F:14-3-3 protein binding"/>
    <property type="evidence" value="ECO:0000314"/>
    <property type="project" value="BHF-UCL"/>
</dbReference>
<dbReference type="GO" id="GO:0005524">
    <property type="term" value="F:ATP binding"/>
    <property type="evidence" value="ECO:0000314"/>
    <property type="project" value="UniProtKB"/>
</dbReference>
<dbReference type="GO" id="GO:0000287">
    <property type="term" value="F:magnesium ion binding"/>
    <property type="evidence" value="ECO:0000314"/>
    <property type="project" value="UniProtKB"/>
</dbReference>
<dbReference type="GO" id="GO:0106310">
    <property type="term" value="F:protein serine kinase activity"/>
    <property type="evidence" value="ECO:0007669"/>
    <property type="project" value="RHEA"/>
</dbReference>
<dbReference type="GO" id="GO:0004674">
    <property type="term" value="F:protein serine/threonine kinase activity"/>
    <property type="evidence" value="ECO:0000314"/>
    <property type="project" value="UniProtKB"/>
</dbReference>
<dbReference type="GO" id="GO:0001525">
    <property type="term" value="P:angiogenesis"/>
    <property type="evidence" value="ECO:0000314"/>
    <property type="project" value="BHF-UCL"/>
</dbReference>
<dbReference type="GO" id="GO:0030154">
    <property type="term" value="P:cell differentiation"/>
    <property type="evidence" value="ECO:0007669"/>
    <property type="project" value="UniProtKB-KW"/>
</dbReference>
<dbReference type="GO" id="GO:0035556">
    <property type="term" value="P:intracellular signal transduction"/>
    <property type="evidence" value="ECO:0000314"/>
    <property type="project" value="UniProtKB"/>
</dbReference>
<dbReference type="GO" id="GO:0045071">
    <property type="term" value="P:negative regulation of viral genome replication"/>
    <property type="evidence" value="ECO:0000250"/>
    <property type="project" value="BHF-UCL"/>
</dbReference>
<dbReference type="GO" id="GO:0035063">
    <property type="term" value="P:nuclear speck organization"/>
    <property type="evidence" value="ECO:0000314"/>
    <property type="project" value="BHF-UCL"/>
</dbReference>
<dbReference type="GO" id="GO:0043491">
    <property type="term" value="P:phosphatidylinositol 3-kinase/protein kinase B signal transduction"/>
    <property type="evidence" value="ECO:0000314"/>
    <property type="project" value="BHF-UCL"/>
</dbReference>
<dbReference type="GO" id="GO:0045787">
    <property type="term" value="P:positive regulation of cell cycle"/>
    <property type="evidence" value="ECO:0000314"/>
    <property type="project" value="BHF-UCL"/>
</dbReference>
<dbReference type="GO" id="GO:0008284">
    <property type="term" value="P:positive regulation of cell population proliferation"/>
    <property type="evidence" value="ECO:0000314"/>
    <property type="project" value="BHF-UCL"/>
</dbReference>
<dbReference type="GO" id="GO:0010628">
    <property type="term" value="P:positive regulation of gene expression"/>
    <property type="evidence" value="ECO:0000314"/>
    <property type="project" value="BHF-UCL"/>
</dbReference>
<dbReference type="GO" id="GO:0043525">
    <property type="term" value="P:positive regulation of neuron apoptotic process"/>
    <property type="evidence" value="ECO:0000314"/>
    <property type="project" value="BHF-UCL"/>
</dbReference>
<dbReference type="GO" id="GO:0045070">
    <property type="term" value="P:positive regulation of viral genome replication"/>
    <property type="evidence" value="ECO:0000250"/>
    <property type="project" value="BHF-UCL"/>
</dbReference>
<dbReference type="GO" id="GO:0006468">
    <property type="term" value="P:protein phosphorylation"/>
    <property type="evidence" value="ECO:0000314"/>
    <property type="project" value="UniProtKB"/>
</dbReference>
<dbReference type="GO" id="GO:0062176">
    <property type="term" value="P:R-loop processing"/>
    <property type="evidence" value="ECO:0000250"/>
    <property type="project" value="UniProtKB"/>
</dbReference>
<dbReference type="GO" id="GO:0008380">
    <property type="term" value="P:RNA splicing"/>
    <property type="evidence" value="ECO:0000314"/>
    <property type="project" value="UniProtKB"/>
</dbReference>
<dbReference type="GO" id="GO:0000245">
    <property type="term" value="P:spliceosomal complex assembly"/>
    <property type="evidence" value="ECO:0000314"/>
    <property type="project" value="UniProtKB"/>
</dbReference>
<dbReference type="FunFam" id="1.10.510.10:FF:000105">
    <property type="entry name" value="SRSF protein kinase 2"/>
    <property type="match status" value="1"/>
</dbReference>
<dbReference type="FunFam" id="1.10.510.10:FF:000834">
    <property type="entry name" value="SRSF protein kinase 2"/>
    <property type="match status" value="1"/>
</dbReference>
<dbReference type="FunFam" id="3.30.200.20:FF:000163">
    <property type="entry name" value="SRSF protein kinase 2 isoform X1"/>
    <property type="match status" value="1"/>
</dbReference>
<dbReference type="Gene3D" id="3.30.200.20">
    <property type="entry name" value="Phosphorylase Kinase, domain 1"/>
    <property type="match status" value="1"/>
</dbReference>
<dbReference type="Gene3D" id="1.10.510.10">
    <property type="entry name" value="Transferase(Phosphotransferase) domain 1"/>
    <property type="match status" value="2"/>
</dbReference>
<dbReference type="InterPro" id="IPR011009">
    <property type="entry name" value="Kinase-like_dom_sf"/>
</dbReference>
<dbReference type="InterPro" id="IPR000719">
    <property type="entry name" value="Prot_kinase_dom"/>
</dbReference>
<dbReference type="InterPro" id="IPR017441">
    <property type="entry name" value="Protein_kinase_ATP_BS"/>
</dbReference>
<dbReference type="InterPro" id="IPR008271">
    <property type="entry name" value="Ser/Thr_kinase_AS"/>
</dbReference>
<dbReference type="InterPro" id="IPR051334">
    <property type="entry name" value="SRPK"/>
</dbReference>
<dbReference type="PANTHER" id="PTHR47634">
    <property type="entry name" value="PROTEIN KINASE DOMAIN-CONTAINING PROTEIN-RELATED"/>
    <property type="match status" value="1"/>
</dbReference>
<dbReference type="PANTHER" id="PTHR47634:SF6">
    <property type="entry name" value="SRSF PROTEIN KINASE 2"/>
    <property type="match status" value="1"/>
</dbReference>
<dbReference type="Pfam" id="PF00069">
    <property type="entry name" value="Pkinase"/>
    <property type="match status" value="2"/>
</dbReference>
<dbReference type="SMART" id="SM00220">
    <property type="entry name" value="S_TKc"/>
    <property type="match status" value="1"/>
</dbReference>
<dbReference type="SUPFAM" id="SSF56112">
    <property type="entry name" value="Protein kinase-like (PK-like)"/>
    <property type="match status" value="1"/>
</dbReference>
<dbReference type="PROSITE" id="PS00107">
    <property type="entry name" value="PROTEIN_KINASE_ATP"/>
    <property type="match status" value="1"/>
</dbReference>
<dbReference type="PROSITE" id="PS50011">
    <property type="entry name" value="PROTEIN_KINASE_DOM"/>
    <property type="match status" value="1"/>
</dbReference>
<dbReference type="PROSITE" id="PS00108">
    <property type="entry name" value="PROTEIN_KINASE_ST"/>
    <property type="match status" value="1"/>
</dbReference>
<accession>O54781</accession>
<accession>Q8VCD9</accession>
<sequence>MSVNSEKSSSSERPEPQQKAPLVPPPPPPPPPPPLPDPAPPEPEEEILGSDDEEQEDPADYCKGGYHPVKIGDLFNGRYHVIRKLGWGHFSTVWLCWDMQGKRFVAMKVVKSAQHYTETALDEIKLLKCVRESDPSDPNKDMVVQLIDDFKISGMNGIHVCMVFEVLGHHLLKWIIKSNYQGLPVRCVKSIIRQVLQGLDYLHSKCKIIHTDIKPENILMCVDDAYVRRMAAEATEWQKAGAPPPSGSAVSTAPQQKPIGKISKNKKKKLKKKQKRQAELLEKRLQEIEELEREAERKILEENITSAEASGEQDGEYQPEVTLKAADLEDTTEEETAKDNGEVEDQEEKEDAEKENAEKDEDDVEQELANLDPTWVESPKANGHIENGPFSLEQQLEDEEDDEDDCANPEEYNLDEPNAESDYTYSSSYEQFNGELPNGQHKTSEFPTPLFSGPLEPVACGSVISEGSPLTEQEESSPSHDRSRTVSASSTGDLPKTKTRAADLLVNPLDPRNADKIRVKIADLGNACWVHKHFTEDIQTRQYRSIEVLIGAGYSTPADIWSTACMAFELATGDYLFEPHSGEDYSRDEDHIAHIIELLGSIPRHFALSGKYSREFFNRRGELRHITKLKPWSLFDVLVEKYGWPHEDAAQFTDFLIPMLEMVPEKRASAGECLRHPWLNS</sequence>
<comment type="function">
    <text evidence="2 9 10">Serine/arginine-rich protein-specific kinase which specifically phosphorylates its substrates at serine residues located in regions rich in arginine/serine dipeptides, known as RS domains and is involved in the phosphorylation of SR splicing factors and the regulation of splicing (PubMed:9446799). Promotes neuronal apoptosis by up-regulating cyclin-D1 (CCND1) expression (PubMed:19592491). This is done by the phosphorylation of SRSF2, leading to the suppression of p53/TP53 phosphorylation thereby relieving the repressive effect of p53/TP53 on cyclin-D1 (CCND1) expression (By similarity). Phosphorylates ACIN1, and redistributes it from the nuclear speckles to the nucleoplasm, resulting in cyclin A1 but not cyclin A2 up-regulation (By similarity). Plays an essential role in spliceosomal B complex formation via the phosphorylation of DDX23/PRP28 (By similarity). Probably by phosphorylating DDX23, leads to the suppression of incorrect R-loops formed during transcription; R-loops are composed of a DNA:RNA hybrid and the associated non-template single-stranded DNA (By similarity).</text>
</comment>
<comment type="catalytic activity">
    <reaction evidence="10">
        <text>L-seryl-[protein] + ATP = O-phospho-L-seryl-[protein] + ADP + H(+)</text>
        <dbReference type="Rhea" id="RHEA:17989"/>
        <dbReference type="Rhea" id="RHEA-COMP:9863"/>
        <dbReference type="Rhea" id="RHEA-COMP:11604"/>
        <dbReference type="ChEBI" id="CHEBI:15378"/>
        <dbReference type="ChEBI" id="CHEBI:29999"/>
        <dbReference type="ChEBI" id="CHEBI:30616"/>
        <dbReference type="ChEBI" id="CHEBI:83421"/>
        <dbReference type="ChEBI" id="CHEBI:456216"/>
        <dbReference type="EC" id="2.7.11.1"/>
    </reaction>
</comment>
<comment type="catalytic activity">
    <reaction evidence="10">
        <text>L-threonyl-[protein] + ATP = O-phospho-L-threonyl-[protein] + ADP + H(+)</text>
        <dbReference type="Rhea" id="RHEA:46608"/>
        <dbReference type="Rhea" id="RHEA-COMP:11060"/>
        <dbReference type="Rhea" id="RHEA-COMP:11605"/>
        <dbReference type="ChEBI" id="CHEBI:15378"/>
        <dbReference type="ChEBI" id="CHEBI:30013"/>
        <dbReference type="ChEBI" id="CHEBI:30616"/>
        <dbReference type="ChEBI" id="CHEBI:61977"/>
        <dbReference type="ChEBI" id="CHEBI:456216"/>
        <dbReference type="EC" id="2.7.11.1"/>
    </reaction>
</comment>
<comment type="cofactor">
    <cofactor evidence="10">
        <name>Mg(2+)</name>
        <dbReference type="ChEBI" id="CHEBI:18420"/>
    </cofactor>
</comment>
<comment type="activity regulation">
    <text evidence="3">Activated by phosphorylation on Ser-50 and Ser-581.</text>
</comment>
<comment type="subunit">
    <text evidence="2 8">Associates with U4/U6-U5 tri-small nuclear ribonucleoproteins (U4/U6-U5 tri-snRNPs) (By similarity). Interacts with PKB/AKT1 in a phosphorylation-dependent manner (By similarity). The phosphorylated form (by PKB/AKT1) interacts with YWHAB and YWHAE (By similarity). Interaction with YWHAB suppresses its cleavage by caspases and inhibits the release of its N-terminal pro-apoptotic fragment (By similarity). Interacts with SFN (By similarity). Interacts with ACIN1 (PubMed:18559500). Interacts with POLR2A/RNA polymerase II; the interaction occurs during the co-transcriptional formation of inappropriate R-loops (By similarity).</text>
</comment>
<comment type="interaction">
    <interactant intactId="EBI-593325">
        <id>O54781</id>
    </interactant>
    <interactant intactId="EBI-398920">
        <id>Q07955</id>
        <label>SRSF1</label>
    </interactant>
    <organismsDiffer>true</organismsDiffer>
    <experiments>3</experiments>
</comment>
<comment type="subcellular location">
    <subcellularLocation>
        <location evidence="10">Cytoplasm</location>
    </subcellularLocation>
    <subcellularLocation>
        <location evidence="10">Nucleus</location>
        <location evidence="10">Nucleoplasm</location>
    </subcellularLocation>
    <subcellularLocation>
        <location evidence="2">Nucleus speckle</location>
    </subcellularLocation>
    <subcellularLocation>
        <location evidence="2">Chromosome</location>
    </subcellularLocation>
    <text evidence="2">Shuttles between the nucleus and the cytoplasm (By similarity). KAT5/TIP60 inhibits its nuclear translocation (By similarity). Phosphorylation at Thr-492 by PKB/AKT1 promotes nuclear translocation (By similarity). Preferentially localizes across the entire gene coding region (By similarity). During transcription, accumulates at chromatin loci where unscheduled R-loops form and colocalizes with paused 'Ser-5'-phosphorylated POLR2A/RNA polymerase II and helicase DDX23 (By similarity).</text>
</comment>
<comment type="tissue specificity">
    <text evidence="10">Expressed in testes, lung and brain.</text>
</comment>
<comment type="PTM">
    <text evidence="1">Phosphorylation at Thr-485 by PKB/AKT1 enhances its stimulatory activity in triggering cyclin-D1 (CCND1) expression and promoting apoptosis in neurons, which can be blocked by YWHAB. It also enhances its protein kinase activity toward ACIN1 and SRSF2, promotes its nuclear translocation and prevents its proteolytic cleavage (By similarity).</text>
</comment>
<comment type="PTM">
    <text evidence="1">Proteolytically cleaved at Asp-137 and Asp-401 by caspase-3 during apoptotic cell death. Cleavage at Asp-137 which is the major site of cleavage, produces a small N-terminal fragment that translocates into nucleus and promotes VP16-induced apoptosis (By similarity).</text>
</comment>
<comment type="similarity">
    <text evidence="11">Belongs to the protein kinase superfamily. CMGC Ser/Thr protein kinase family.</text>
</comment>
<gene>
    <name evidence="14" type="primary">Srpk2</name>
</gene>
<organism>
    <name type="scientific">Mus musculus</name>
    <name type="common">Mouse</name>
    <dbReference type="NCBI Taxonomy" id="10090"/>
    <lineage>
        <taxon>Eukaryota</taxon>
        <taxon>Metazoa</taxon>
        <taxon>Chordata</taxon>
        <taxon>Craniata</taxon>
        <taxon>Vertebrata</taxon>
        <taxon>Euteleostomi</taxon>
        <taxon>Mammalia</taxon>
        <taxon>Eutheria</taxon>
        <taxon>Euarchontoglires</taxon>
        <taxon>Glires</taxon>
        <taxon>Rodentia</taxon>
        <taxon>Myomorpha</taxon>
        <taxon>Muroidea</taxon>
        <taxon>Muridae</taxon>
        <taxon>Murinae</taxon>
        <taxon>Mus</taxon>
        <taxon>Mus</taxon>
    </lineage>
</organism>
<evidence type="ECO:0000250" key="1"/>
<evidence type="ECO:0000250" key="2">
    <source>
        <dbReference type="UniProtKB" id="P78362"/>
    </source>
</evidence>
<evidence type="ECO:0000250" key="3">
    <source>
        <dbReference type="UniProtKB" id="Q96SB4"/>
    </source>
</evidence>
<evidence type="ECO:0000250" key="4">
    <source>
        <dbReference type="UniProtKB" id="Q9UPE1"/>
    </source>
</evidence>
<evidence type="ECO:0000255" key="5">
    <source>
        <dbReference type="PROSITE-ProRule" id="PRU00159"/>
    </source>
</evidence>
<evidence type="ECO:0000255" key="6">
    <source>
        <dbReference type="PROSITE-ProRule" id="PRU10027"/>
    </source>
</evidence>
<evidence type="ECO:0000256" key="7">
    <source>
        <dbReference type="SAM" id="MobiDB-lite"/>
    </source>
</evidence>
<evidence type="ECO:0000269" key="8">
    <source>
    </source>
</evidence>
<evidence type="ECO:0000269" key="9">
    <source>
    </source>
</evidence>
<evidence type="ECO:0000269" key="10">
    <source>
    </source>
</evidence>
<evidence type="ECO:0000305" key="11"/>
<evidence type="ECO:0000312" key="12">
    <source>
        <dbReference type="EMBL" id="AAH20178.1"/>
    </source>
</evidence>
<evidence type="ECO:0000312" key="13">
    <source>
        <dbReference type="EMBL" id="BAA24055.1"/>
    </source>
</evidence>
<evidence type="ECO:0000312" key="14">
    <source>
        <dbReference type="MGI" id="MGI:1201408"/>
    </source>
</evidence>
<evidence type="ECO:0007744" key="15">
    <source>
    </source>
</evidence>
<name>SRPK2_MOUSE</name>
<keyword id="KW-0067">ATP-binding</keyword>
<keyword id="KW-0158">Chromosome</keyword>
<keyword id="KW-0963">Cytoplasm</keyword>
<keyword id="KW-0221">Differentiation</keyword>
<keyword id="KW-0418">Kinase</keyword>
<keyword id="KW-0507">mRNA processing</keyword>
<keyword id="KW-0508">mRNA splicing</keyword>
<keyword id="KW-0547">Nucleotide-binding</keyword>
<keyword id="KW-0539">Nucleus</keyword>
<keyword id="KW-0597">Phosphoprotein</keyword>
<keyword id="KW-1185">Reference proteome</keyword>
<keyword id="KW-0723">Serine/threonine-protein kinase</keyword>
<keyword id="KW-0808">Transferase</keyword>
<reference evidence="11 13" key="1">
    <citation type="journal article" date="1998" name="Biochem. Biophys. Res. Commun.">
        <title>Novel SR-protein-specific kinase, SRPK2, disassembles nuclear speckles.</title>
        <authorList>
            <person name="Kuroyanagi N."/>
            <person name="Onogi H."/>
            <person name="Wakabayashi T."/>
            <person name="Hagiwara M."/>
        </authorList>
    </citation>
    <scope>NUCLEOTIDE SEQUENCE [MRNA]</scope>
    <scope>FUNCTION</scope>
    <scope>CATALYTIC ACTIVITY</scope>
    <scope>COFACTOR</scope>
    <scope>TISSUE SPECIFICITY</scope>
    <scope>SUBCELLULAR LOCATION</scope>
    <source>
        <tissue evidence="10">Brain</tissue>
    </source>
</reference>
<reference evidence="12" key="2">
    <citation type="journal article" date="2004" name="Genome Res.">
        <title>The status, quality, and expansion of the NIH full-length cDNA project: the Mammalian Gene Collection (MGC).</title>
        <authorList>
            <consortium name="The MGC Project Team"/>
        </authorList>
    </citation>
    <scope>NUCLEOTIDE SEQUENCE [LARGE SCALE MRNA]</scope>
    <source>
        <tissue evidence="12">Eye</tissue>
    </source>
</reference>
<reference key="3">
    <citation type="journal article" date="2008" name="Cancer Res.">
        <title>Serine/arginine protein-specific kinase 2 promotes leukemia cell proliferation by phosphorylating acinus and regulating cyclin A1.</title>
        <authorList>
            <person name="Jang S.W."/>
            <person name="Yang S.J."/>
            <person name="Ehlen A."/>
            <person name="Dong S."/>
            <person name="Khoury H."/>
            <person name="Chen J."/>
            <person name="Persson J.L."/>
            <person name="Ye K."/>
        </authorList>
    </citation>
    <scope>INTERACTION WITH ACIN1</scope>
</reference>
<reference key="4">
    <citation type="journal article" date="2009" name="J. Biol. Chem.">
        <title>Interaction of Akt-phosphorylated SRPK2 with 14-3-3 mediates cell cycle and cell death in neurons.</title>
        <authorList>
            <person name="Jang S.W."/>
            <person name="Liu X."/>
            <person name="Fu H."/>
            <person name="Rees H."/>
            <person name="Yepes M."/>
            <person name="Levey A."/>
            <person name="Ye K."/>
        </authorList>
    </citation>
    <scope>FUNCTION</scope>
</reference>
<reference key="5">
    <citation type="journal article" date="2010" name="Cell">
        <title>A tissue-specific atlas of mouse protein phosphorylation and expression.</title>
        <authorList>
            <person name="Huttlin E.L."/>
            <person name="Jedrychowski M.P."/>
            <person name="Elias J.E."/>
            <person name="Goswami T."/>
            <person name="Rad R."/>
            <person name="Beausoleil S.A."/>
            <person name="Villen J."/>
            <person name="Haas W."/>
            <person name="Sowa M.E."/>
            <person name="Gygi S.P."/>
        </authorList>
    </citation>
    <scope>PHOSPHORYLATION [LARGE SCALE ANALYSIS] AT SER-50; THR-331; THR-332; SER-378; SER-468; THR-471; SER-477; SER-479; SER-483 AND SER-487</scope>
    <scope>IDENTIFICATION BY MASS SPECTROMETRY [LARGE SCALE ANALYSIS]</scope>
    <source>
        <tissue>Brain</tissue>
        <tissue>Brown adipose tissue</tissue>
        <tissue>Heart</tissue>
        <tissue>Kidney</tissue>
        <tissue>Liver</tissue>
        <tissue>Lung</tissue>
        <tissue>Pancreas</tissue>
        <tissue>Spleen</tissue>
        <tissue>Testis</tissue>
    </source>
</reference>
<protein>
    <recommendedName>
        <fullName>SRSF protein kinase 2</fullName>
        <ecNumber evidence="10">2.7.11.1</ecNumber>
    </recommendedName>
    <alternativeName>
        <fullName>SFRS protein kinase 2</fullName>
    </alternativeName>
    <alternativeName>
        <fullName>Serine/arginine-rich protein-specific kinase 2</fullName>
        <shortName>SR-protein-specific kinase 2</shortName>
    </alternativeName>
    <component>
        <recommendedName>
            <fullName>SRSF protein kinase 2 N-terminal</fullName>
        </recommendedName>
    </component>
    <component>
        <recommendedName>
            <fullName>SRSF protein kinase 2 C-terminal</fullName>
        </recommendedName>
    </component>
</protein>